<comment type="function">
    <text evidence="1">Specifically methylates the adenine in position 1618 of 23S rRNA.</text>
</comment>
<comment type="catalytic activity">
    <reaction evidence="1">
        <text>adenosine(1618) in 23S rRNA + S-adenosyl-L-methionine = N(6)-methyladenosine(1618) in 23S rRNA + S-adenosyl-L-homocysteine + H(+)</text>
        <dbReference type="Rhea" id="RHEA:16497"/>
        <dbReference type="Rhea" id="RHEA-COMP:10229"/>
        <dbReference type="Rhea" id="RHEA-COMP:10231"/>
        <dbReference type="ChEBI" id="CHEBI:15378"/>
        <dbReference type="ChEBI" id="CHEBI:57856"/>
        <dbReference type="ChEBI" id="CHEBI:59789"/>
        <dbReference type="ChEBI" id="CHEBI:74411"/>
        <dbReference type="ChEBI" id="CHEBI:74449"/>
        <dbReference type="EC" id="2.1.1.181"/>
    </reaction>
</comment>
<comment type="subcellular location">
    <subcellularLocation>
        <location evidence="1">Cytoplasm</location>
    </subcellularLocation>
</comment>
<comment type="similarity">
    <text evidence="1">Belongs to the methyltransferase superfamily. METTL16/RlmF family.</text>
</comment>
<proteinExistence type="inferred from homology"/>
<organism>
    <name type="scientific">Pseudomonas aeruginosa (strain UCBPP-PA14)</name>
    <dbReference type="NCBI Taxonomy" id="208963"/>
    <lineage>
        <taxon>Bacteria</taxon>
        <taxon>Pseudomonadati</taxon>
        <taxon>Pseudomonadota</taxon>
        <taxon>Gammaproteobacteria</taxon>
        <taxon>Pseudomonadales</taxon>
        <taxon>Pseudomonadaceae</taxon>
        <taxon>Pseudomonas</taxon>
    </lineage>
</organism>
<evidence type="ECO:0000255" key="1">
    <source>
        <dbReference type="HAMAP-Rule" id="MF_01848"/>
    </source>
</evidence>
<evidence type="ECO:0000256" key="2">
    <source>
        <dbReference type="SAM" id="MobiDB-lite"/>
    </source>
</evidence>
<name>RLMF_PSEAB</name>
<dbReference type="EC" id="2.1.1.181" evidence="1"/>
<dbReference type="EMBL" id="CP000438">
    <property type="protein sequence ID" value="ABJ13106.1"/>
    <property type="molecule type" value="Genomic_DNA"/>
</dbReference>
<dbReference type="RefSeq" id="WP_003092887.1">
    <property type="nucleotide sequence ID" value="NZ_CP034244.1"/>
</dbReference>
<dbReference type="SMR" id="Q02RZ9"/>
<dbReference type="KEGG" id="pau:PA14_14340"/>
<dbReference type="PseudoCAP" id="PA14_14340"/>
<dbReference type="HOGENOM" id="CLU_027534_3_0_6"/>
<dbReference type="BioCyc" id="PAER208963:G1G74-1178-MONOMER"/>
<dbReference type="Proteomes" id="UP000000653">
    <property type="component" value="Chromosome"/>
</dbReference>
<dbReference type="GO" id="GO:0005737">
    <property type="term" value="C:cytoplasm"/>
    <property type="evidence" value="ECO:0007669"/>
    <property type="project" value="UniProtKB-SubCell"/>
</dbReference>
<dbReference type="GO" id="GO:0052907">
    <property type="term" value="F:23S rRNA (adenine(1618)-N(6))-methyltransferase activity"/>
    <property type="evidence" value="ECO:0007669"/>
    <property type="project" value="UniProtKB-EC"/>
</dbReference>
<dbReference type="GO" id="GO:0070475">
    <property type="term" value="P:rRNA base methylation"/>
    <property type="evidence" value="ECO:0007669"/>
    <property type="project" value="TreeGrafter"/>
</dbReference>
<dbReference type="CDD" id="cd02440">
    <property type="entry name" value="AdoMet_MTases"/>
    <property type="match status" value="1"/>
</dbReference>
<dbReference type="FunFam" id="3.40.50.150:FF:000045">
    <property type="entry name" value="Ribosomal RNA large subunit methyltransferase F"/>
    <property type="match status" value="1"/>
</dbReference>
<dbReference type="Gene3D" id="3.40.50.150">
    <property type="entry name" value="Vaccinia Virus protein VP39"/>
    <property type="match status" value="1"/>
</dbReference>
<dbReference type="HAMAP" id="MF_01848">
    <property type="entry name" value="23SrRNA_methyltr_F"/>
    <property type="match status" value="1"/>
</dbReference>
<dbReference type="InterPro" id="IPR010286">
    <property type="entry name" value="METTL16/RlmF"/>
</dbReference>
<dbReference type="InterPro" id="IPR016909">
    <property type="entry name" value="rRNA_lsu_MeTfrase_F"/>
</dbReference>
<dbReference type="InterPro" id="IPR029063">
    <property type="entry name" value="SAM-dependent_MTases_sf"/>
</dbReference>
<dbReference type="NCBIfam" id="NF008725">
    <property type="entry name" value="PRK11727.1"/>
    <property type="match status" value="1"/>
</dbReference>
<dbReference type="PANTHER" id="PTHR13393:SF0">
    <property type="entry name" value="RNA N6-ADENOSINE-METHYLTRANSFERASE METTL16"/>
    <property type="match status" value="1"/>
</dbReference>
<dbReference type="PANTHER" id="PTHR13393">
    <property type="entry name" value="SAM-DEPENDENT METHYLTRANSFERASE"/>
    <property type="match status" value="1"/>
</dbReference>
<dbReference type="Pfam" id="PF05971">
    <property type="entry name" value="Methyltransf_10"/>
    <property type="match status" value="1"/>
</dbReference>
<dbReference type="PIRSF" id="PIRSF029038">
    <property type="entry name" value="Mtase_YbiN_prd"/>
    <property type="match status" value="1"/>
</dbReference>
<dbReference type="SUPFAM" id="SSF53335">
    <property type="entry name" value="S-adenosyl-L-methionine-dependent methyltransferases"/>
    <property type="match status" value="1"/>
</dbReference>
<feature type="chain" id="PRO_0000349927" description="Ribosomal RNA large subunit methyltransferase F">
    <location>
        <begin position="1"/>
        <end position="336"/>
    </location>
</feature>
<feature type="region of interest" description="Disordered" evidence="2">
    <location>
        <begin position="1"/>
        <end position="24"/>
    </location>
</feature>
<reference key="1">
    <citation type="journal article" date="2006" name="Genome Biol.">
        <title>Genomic analysis reveals that Pseudomonas aeruginosa virulence is combinatorial.</title>
        <authorList>
            <person name="Lee D.G."/>
            <person name="Urbach J.M."/>
            <person name="Wu G."/>
            <person name="Liberati N.T."/>
            <person name="Feinbaum R.L."/>
            <person name="Miyata S."/>
            <person name="Diggins L.T."/>
            <person name="He J."/>
            <person name="Saucier M."/>
            <person name="Deziel E."/>
            <person name="Friedman L."/>
            <person name="Li L."/>
            <person name="Grills G."/>
            <person name="Montgomery K."/>
            <person name="Kucherlapati R."/>
            <person name="Rahme L.G."/>
            <person name="Ausubel F.M."/>
        </authorList>
    </citation>
    <scope>NUCLEOTIDE SEQUENCE [LARGE SCALE GENOMIC DNA]</scope>
    <source>
        <strain>UCBPP-PA14</strain>
    </source>
</reference>
<keyword id="KW-0963">Cytoplasm</keyword>
<keyword id="KW-0489">Methyltransferase</keyword>
<keyword id="KW-0698">rRNA processing</keyword>
<keyword id="KW-0949">S-adenosyl-L-methionine</keyword>
<keyword id="KW-0808">Transferase</keyword>
<accession>Q02RZ9</accession>
<protein>
    <recommendedName>
        <fullName evidence="1">Ribosomal RNA large subunit methyltransferase F</fullName>
        <ecNumber evidence="1">2.1.1.181</ecNumber>
    </recommendedName>
    <alternativeName>
        <fullName evidence="1">23S rRNA mA1618 methyltransferase</fullName>
    </alternativeName>
    <alternativeName>
        <fullName evidence="1">rRNA adenine N-6-methyltransferase</fullName>
    </alternativeName>
</protein>
<gene>
    <name evidence="1" type="primary">rlmF</name>
    <name type="ordered locus">PA14_14340</name>
</gene>
<sequence>MPRPTSPHPDAERKSASPLHPRNRHLGRYDFPRLIAGSPELERFVILNPYGRQSIDFADPAAVKAFNRALLQQFYDVREWDIPDGYLCPPIPGRADYLHYLADLLGASHDGLIPRGPGLRALDVGTGANCIYPLLGHHEYGWRFVGADIDPQSLASAAAILAANPRFAAAIELRRQPDRRQIFQGLIGVDERFDMTLCNPPFHASLDEATRGSRRKWKNLGKLDPTRTLPLLNFGGQGAELYCEGGEAAFLAGMAEESRAFATQVFWFTTLVSKASNLPNLQERLKTLGASDIRVVDMAQGQKQSRFVAWTYLDKKQRRAWRKERWTAALLEPLGE</sequence>